<evidence type="ECO:0000255" key="1">
    <source>
        <dbReference type="HAMAP-Rule" id="MF_01077"/>
    </source>
</evidence>
<reference key="1">
    <citation type="submission" date="2008-10" db="EMBL/GenBank/DDBJ databases">
        <title>Genome sequence of Clostridium botulinum A2 Kyoto.</title>
        <authorList>
            <person name="Shrivastava S."/>
            <person name="Brinkac L.M."/>
            <person name="Brown J.L."/>
            <person name="Bruce D."/>
            <person name="Detter C.C."/>
            <person name="Johnson E.A."/>
            <person name="Munk C.A."/>
            <person name="Smith L.A."/>
            <person name="Smith T.J."/>
            <person name="Sutton G."/>
            <person name="Brettin T.S."/>
        </authorList>
    </citation>
    <scope>NUCLEOTIDE SEQUENCE [LARGE SCALE GENOMIC DNA]</scope>
    <source>
        <strain>Kyoto / Type A2</strain>
    </source>
</reference>
<feature type="chain" id="PRO_1000149786" description="Ribosome maturation factor RimP">
    <location>
        <begin position="1"/>
        <end position="153"/>
    </location>
</feature>
<sequence>MSKHSLIENLKKQIEPIAEGLDYELYHIEFVKEGKENYLRIYIDSENGVSLEGCEKVSRAISELLDDIDPIQESYYLEVSSPGIDRVLYTDKHLEKYKSYNIVLNLYSPIDKKKKYEGELVDFNENEIDIKVEENIVTIPREKISKTTLKGEL</sequence>
<proteinExistence type="inferred from homology"/>
<accession>C1FS63</accession>
<keyword id="KW-0963">Cytoplasm</keyword>
<keyword id="KW-0690">Ribosome biogenesis</keyword>
<comment type="function">
    <text evidence="1">Required for maturation of 30S ribosomal subunits.</text>
</comment>
<comment type="subcellular location">
    <subcellularLocation>
        <location evidence="1">Cytoplasm</location>
    </subcellularLocation>
</comment>
<comment type="similarity">
    <text evidence="1">Belongs to the RimP family.</text>
</comment>
<dbReference type="EMBL" id="CP001581">
    <property type="protein sequence ID" value="ACO86977.1"/>
    <property type="molecule type" value="Genomic_DNA"/>
</dbReference>
<dbReference type="RefSeq" id="WP_012705621.1">
    <property type="nucleotide sequence ID" value="NC_012563.1"/>
</dbReference>
<dbReference type="SMR" id="C1FS63"/>
<dbReference type="KEGG" id="cby:CLM_2715"/>
<dbReference type="eggNOG" id="COG0779">
    <property type="taxonomic scope" value="Bacteria"/>
</dbReference>
<dbReference type="HOGENOM" id="CLU_070525_2_0_9"/>
<dbReference type="Proteomes" id="UP000001374">
    <property type="component" value="Chromosome"/>
</dbReference>
<dbReference type="GO" id="GO:0005829">
    <property type="term" value="C:cytosol"/>
    <property type="evidence" value="ECO:0007669"/>
    <property type="project" value="TreeGrafter"/>
</dbReference>
<dbReference type="GO" id="GO:0000028">
    <property type="term" value="P:ribosomal small subunit assembly"/>
    <property type="evidence" value="ECO:0007669"/>
    <property type="project" value="TreeGrafter"/>
</dbReference>
<dbReference type="GO" id="GO:0006412">
    <property type="term" value="P:translation"/>
    <property type="evidence" value="ECO:0007669"/>
    <property type="project" value="TreeGrafter"/>
</dbReference>
<dbReference type="CDD" id="cd01734">
    <property type="entry name" value="YlxS_C"/>
    <property type="match status" value="1"/>
</dbReference>
<dbReference type="FunFam" id="2.30.30.180:FF:000007">
    <property type="entry name" value="Ribosome maturation factor RimP"/>
    <property type="match status" value="1"/>
</dbReference>
<dbReference type="FunFam" id="3.30.300.70:FF:000001">
    <property type="entry name" value="Ribosome maturation factor RimP"/>
    <property type="match status" value="1"/>
</dbReference>
<dbReference type="Gene3D" id="2.30.30.180">
    <property type="entry name" value="Ribosome maturation factor RimP, C-terminal domain"/>
    <property type="match status" value="1"/>
</dbReference>
<dbReference type="Gene3D" id="3.30.300.70">
    <property type="entry name" value="RimP-like superfamily, N-terminal"/>
    <property type="match status" value="1"/>
</dbReference>
<dbReference type="HAMAP" id="MF_01077">
    <property type="entry name" value="RimP"/>
    <property type="match status" value="1"/>
</dbReference>
<dbReference type="InterPro" id="IPR003728">
    <property type="entry name" value="Ribosome_maturation_RimP"/>
</dbReference>
<dbReference type="InterPro" id="IPR028998">
    <property type="entry name" value="RimP_C"/>
</dbReference>
<dbReference type="InterPro" id="IPR036847">
    <property type="entry name" value="RimP_C_sf"/>
</dbReference>
<dbReference type="InterPro" id="IPR028989">
    <property type="entry name" value="RimP_N"/>
</dbReference>
<dbReference type="InterPro" id="IPR035956">
    <property type="entry name" value="RimP_N_sf"/>
</dbReference>
<dbReference type="NCBIfam" id="NF000934">
    <property type="entry name" value="PRK00092.3-1"/>
    <property type="match status" value="1"/>
</dbReference>
<dbReference type="PANTHER" id="PTHR33867">
    <property type="entry name" value="RIBOSOME MATURATION FACTOR RIMP"/>
    <property type="match status" value="1"/>
</dbReference>
<dbReference type="PANTHER" id="PTHR33867:SF1">
    <property type="entry name" value="RIBOSOME MATURATION FACTOR RIMP"/>
    <property type="match status" value="1"/>
</dbReference>
<dbReference type="Pfam" id="PF17384">
    <property type="entry name" value="DUF150_C"/>
    <property type="match status" value="1"/>
</dbReference>
<dbReference type="Pfam" id="PF02576">
    <property type="entry name" value="RimP_N"/>
    <property type="match status" value="1"/>
</dbReference>
<dbReference type="SUPFAM" id="SSF74942">
    <property type="entry name" value="YhbC-like, C-terminal domain"/>
    <property type="match status" value="1"/>
</dbReference>
<dbReference type="SUPFAM" id="SSF75420">
    <property type="entry name" value="YhbC-like, N-terminal domain"/>
    <property type="match status" value="1"/>
</dbReference>
<gene>
    <name evidence="1" type="primary">rimP</name>
    <name type="ordered locus">CLM_2715</name>
</gene>
<name>RIMP_CLOBJ</name>
<protein>
    <recommendedName>
        <fullName evidence="1">Ribosome maturation factor RimP</fullName>
    </recommendedName>
</protein>
<organism>
    <name type="scientific">Clostridium botulinum (strain Kyoto / Type A2)</name>
    <dbReference type="NCBI Taxonomy" id="536232"/>
    <lineage>
        <taxon>Bacteria</taxon>
        <taxon>Bacillati</taxon>
        <taxon>Bacillota</taxon>
        <taxon>Clostridia</taxon>
        <taxon>Eubacteriales</taxon>
        <taxon>Clostridiaceae</taxon>
        <taxon>Clostridium</taxon>
    </lineage>
</organism>